<name>Y3800_DICDI</name>
<feature type="chain" id="PRO_0000367481" description="Ankyrin repeat, bromo and BTB domain-containing protein DDB_G0293800">
    <location>
        <begin position="1"/>
        <end position="806"/>
    </location>
</feature>
<feature type="repeat" description="ANK 1">
    <location>
        <begin position="1"/>
        <end position="30"/>
    </location>
</feature>
<feature type="repeat" description="ANK 2">
    <location>
        <begin position="34"/>
        <end position="63"/>
    </location>
</feature>
<feature type="repeat" description="ANK 3">
    <location>
        <begin position="67"/>
        <end position="96"/>
    </location>
</feature>
<feature type="repeat" description="ANK 4">
    <location>
        <begin position="100"/>
        <end position="130"/>
    </location>
</feature>
<feature type="repeat" description="ANK 5">
    <location>
        <begin position="134"/>
        <end position="163"/>
    </location>
</feature>
<feature type="domain" description="BTB" evidence="2">
    <location>
        <begin position="239"/>
        <end position="307"/>
    </location>
</feature>
<feature type="domain" description="Bromo" evidence="1">
    <location>
        <begin position="516"/>
        <end position="622"/>
    </location>
</feature>
<feature type="domain" description="NET" evidence="3">
    <location>
        <begin position="727"/>
        <end position="806"/>
    </location>
</feature>
<feature type="region of interest" description="Disordered" evidence="4">
    <location>
        <begin position="210"/>
        <end position="231"/>
    </location>
</feature>
<feature type="region of interest" description="Disordered" evidence="4">
    <location>
        <begin position="423"/>
        <end position="517"/>
    </location>
</feature>
<feature type="region of interest" description="Disordered" evidence="4">
    <location>
        <begin position="621"/>
        <end position="743"/>
    </location>
</feature>
<feature type="compositionally biased region" description="Basic and acidic residues" evidence="4">
    <location>
        <begin position="210"/>
        <end position="228"/>
    </location>
</feature>
<feature type="compositionally biased region" description="Low complexity" evidence="4">
    <location>
        <begin position="426"/>
        <end position="436"/>
    </location>
</feature>
<feature type="compositionally biased region" description="Low complexity" evidence="4">
    <location>
        <begin position="443"/>
        <end position="511"/>
    </location>
</feature>
<feature type="compositionally biased region" description="Pro residues" evidence="4">
    <location>
        <begin position="626"/>
        <end position="641"/>
    </location>
</feature>
<feature type="compositionally biased region" description="Low complexity" evidence="4">
    <location>
        <begin position="642"/>
        <end position="658"/>
    </location>
</feature>
<feature type="compositionally biased region" description="Basic and acidic residues" evidence="4">
    <location>
        <begin position="666"/>
        <end position="675"/>
    </location>
</feature>
<feature type="compositionally biased region" description="Polar residues" evidence="4">
    <location>
        <begin position="676"/>
        <end position="693"/>
    </location>
</feature>
<feature type="compositionally biased region" description="Low complexity" evidence="4">
    <location>
        <begin position="694"/>
        <end position="733"/>
    </location>
</feature>
<organism>
    <name type="scientific">Dictyostelium discoideum</name>
    <name type="common">Social amoeba</name>
    <dbReference type="NCBI Taxonomy" id="44689"/>
    <lineage>
        <taxon>Eukaryota</taxon>
        <taxon>Amoebozoa</taxon>
        <taxon>Evosea</taxon>
        <taxon>Eumycetozoa</taxon>
        <taxon>Dictyostelia</taxon>
        <taxon>Dictyosteliales</taxon>
        <taxon>Dictyosteliaceae</taxon>
        <taxon>Dictyostelium</taxon>
    </lineage>
</organism>
<dbReference type="EMBL" id="AAFI02000220">
    <property type="protein sequence ID" value="EAL60533.1"/>
    <property type="molecule type" value="Genomic_DNA"/>
</dbReference>
<dbReference type="RefSeq" id="XP_628948.1">
    <property type="nucleotide sequence ID" value="XM_628946.1"/>
</dbReference>
<dbReference type="SMR" id="Q54BA2"/>
<dbReference type="FunCoup" id="Q54BA2">
    <property type="interactions" value="461"/>
</dbReference>
<dbReference type="STRING" id="44689.Q54BA2"/>
<dbReference type="GlyGen" id="Q54BA2">
    <property type="glycosylation" value="4 sites"/>
</dbReference>
<dbReference type="PaxDb" id="44689-DDB0220694"/>
<dbReference type="EnsemblProtists" id="EAL60533">
    <property type="protein sequence ID" value="EAL60533"/>
    <property type="gene ID" value="DDB_G0293800"/>
</dbReference>
<dbReference type="GeneID" id="8629425"/>
<dbReference type="KEGG" id="ddi:DDB_G0293800"/>
<dbReference type="dictyBase" id="DDB_G0293800"/>
<dbReference type="VEuPathDB" id="AmoebaDB:DDB_G0293800"/>
<dbReference type="eggNOG" id="KOG1474">
    <property type="taxonomic scope" value="Eukaryota"/>
</dbReference>
<dbReference type="eggNOG" id="KOG4177">
    <property type="taxonomic scope" value="Eukaryota"/>
</dbReference>
<dbReference type="HOGENOM" id="CLU_349656_0_0_1"/>
<dbReference type="InParanoid" id="Q54BA2"/>
<dbReference type="OMA" id="QKNCIDI"/>
<dbReference type="PRO" id="PR:Q54BA2"/>
<dbReference type="Proteomes" id="UP000002195">
    <property type="component" value="Chromosome 6"/>
</dbReference>
<dbReference type="GO" id="GO:0000785">
    <property type="term" value="C:chromatin"/>
    <property type="evidence" value="ECO:0000318"/>
    <property type="project" value="GO_Central"/>
</dbReference>
<dbReference type="GO" id="GO:0005634">
    <property type="term" value="C:nucleus"/>
    <property type="evidence" value="ECO:0000318"/>
    <property type="project" value="GO_Central"/>
</dbReference>
<dbReference type="GO" id="GO:0070577">
    <property type="term" value="F:lysine-acetylated histone binding"/>
    <property type="evidence" value="ECO:0000318"/>
    <property type="project" value="GO_Central"/>
</dbReference>
<dbReference type="GO" id="GO:0006338">
    <property type="term" value="P:chromatin remodeling"/>
    <property type="evidence" value="ECO:0000318"/>
    <property type="project" value="GO_Central"/>
</dbReference>
<dbReference type="GO" id="GO:0006355">
    <property type="term" value="P:regulation of DNA-templated transcription"/>
    <property type="evidence" value="ECO:0000318"/>
    <property type="project" value="GO_Central"/>
</dbReference>
<dbReference type="Gene3D" id="1.20.1270.220">
    <property type="match status" value="1"/>
</dbReference>
<dbReference type="Gene3D" id="1.25.40.20">
    <property type="entry name" value="Ankyrin repeat-containing domain"/>
    <property type="match status" value="2"/>
</dbReference>
<dbReference type="Gene3D" id="1.20.920.10">
    <property type="entry name" value="Bromodomain-like"/>
    <property type="match status" value="1"/>
</dbReference>
<dbReference type="Gene3D" id="3.30.710.10">
    <property type="entry name" value="Potassium Channel Kv1.1, Chain A"/>
    <property type="match status" value="1"/>
</dbReference>
<dbReference type="InterPro" id="IPR002110">
    <property type="entry name" value="Ankyrin_rpt"/>
</dbReference>
<dbReference type="InterPro" id="IPR036770">
    <property type="entry name" value="Ankyrin_rpt-contain_sf"/>
</dbReference>
<dbReference type="InterPro" id="IPR001487">
    <property type="entry name" value="Bromodomain"/>
</dbReference>
<dbReference type="InterPro" id="IPR036427">
    <property type="entry name" value="Bromodomain-like_sf"/>
</dbReference>
<dbReference type="InterPro" id="IPR018359">
    <property type="entry name" value="Bromodomain_CS"/>
</dbReference>
<dbReference type="InterPro" id="IPR000210">
    <property type="entry name" value="BTB/POZ_dom"/>
</dbReference>
<dbReference type="InterPro" id="IPR027353">
    <property type="entry name" value="NET_dom"/>
</dbReference>
<dbReference type="InterPro" id="IPR038336">
    <property type="entry name" value="NET_sf"/>
</dbReference>
<dbReference type="InterPro" id="IPR011333">
    <property type="entry name" value="SKP1/BTB/POZ_sf"/>
</dbReference>
<dbReference type="PANTHER" id="PTHR24173">
    <property type="entry name" value="ANKYRIN REPEAT CONTAINING"/>
    <property type="match status" value="1"/>
</dbReference>
<dbReference type="PANTHER" id="PTHR24173:SF74">
    <property type="entry name" value="ANKYRIN REPEAT DOMAIN-CONTAINING PROTEIN 16"/>
    <property type="match status" value="1"/>
</dbReference>
<dbReference type="Pfam" id="PF00023">
    <property type="entry name" value="Ank"/>
    <property type="match status" value="2"/>
</dbReference>
<dbReference type="Pfam" id="PF12796">
    <property type="entry name" value="Ank_2"/>
    <property type="match status" value="1"/>
</dbReference>
<dbReference type="Pfam" id="PF17035">
    <property type="entry name" value="BET"/>
    <property type="match status" value="1"/>
</dbReference>
<dbReference type="Pfam" id="PF00439">
    <property type="entry name" value="Bromodomain"/>
    <property type="match status" value="1"/>
</dbReference>
<dbReference type="Pfam" id="PF00651">
    <property type="entry name" value="BTB"/>
    <property type="match status" value="1"/>
</dbReference>
<dbReference type="PRINTS" id="PR00503">
    <property type="entry name" value="BROMODOMAIN"/>
</dbReference>
<dbReference type="SMART" id="SM00248">
    <property type="entry name" value="ANK"/>
    <property type="match status" value="4"/>
</dbReference>
<dbReference type="SMART" id="SM00297">
    <property type="entry name" value="BROMO"/>
    <property type="match status" value="1"/>
</dbReference>
<dbReference type="SMART" id="SM00225">
    <property type="entry name" value="BTB"/>
    <property type="match status" value="1"/>
</dbReference>
<dbReference type="SUPFAM" id="SSF48403">
    <property type="entry name" value="Ankyrin repeat"/>
    <property type="match status" value="1"/>
</dbReference>
<dbReference type="SUPFAM" id="SSF47370">
    <property type="entry name" value="Bromodomain"/>
    <property type="match status" value="1"/>
</dbReference>
<dbReference type="SUPFAM" id="SSF54695">
    <property type="entry name" value="POZ domain"/>
    <property type="match status" value="1"/>
</dbReference>
<dbReference type="PROSITE" id="PS50297">
    <property type="entry name" value="ANK_REP_REGION"/>
    <property type="match status" value="1"/>
</dbReference>
<dbReference type="PROSITE" id="PS50088">
    <property type="entry name" value="ANK_REPEAT"/>
    <property type="match status" value="4"/>
</dbReference>
<dbReference type="PROSITE" id="PS00633">
    <property type="entry name" value="BROMODOMAIN_1"/>
    <property type="match status" value="1"/>
</dbReference>
<dbReference type="PROSITE" id="PS50014">
    <property type="entry name" value="BROMODOMAIN_2"/>
    <property type="match status" value="1"/>
</dbReference>
<dbReference type="PROSITE" id="PS50097">
    <property type="entry name" value="BTB"/>
    <property type="match status" value="1"/>
</dbReference>
<dbReference type="PROSITE" id="PS51525">
    <property type="entry name" value="NET"/>
    <property type="match status" value="1"/>
</dbReference>
<gene>
    <name type="ORF">DDB_G0293800</name>
</gene>
<reference key="1">
    <citation type="journal article" date="2005" name="Nature">
        <title>The genome of the social amoeba Dictyostelium discoideum.</title>
        <authorList>
            <person name="Eichinger L."/>
            <person name="Pachebat J.A."/>
            <person name="Gloeckner G."/>
            <person name="Rajandream M.A."/>
            <person name="Sucgang R."/>
            <person name="Berriman M."/>
            <person name="Song J."/>
            <person name="Olsen R."/>
            <person name="Szafranski K."/>
            <person name="Xu Q."/>
            <person name="Tunggal B."/>
            <person name="Kummerfeld S."/>
            <person name="Madera M."/>
            <person name="Konfortov B.A."/>
            <person name="Rivero F."/>
            <person name="Bankier A.T."/>
            <person name="Lehmann R."/>
            <person name="Hamlin N."/>
            <person name="Davies R."/>
            <person name="Gaudet P."/>
            <person name="Fey P."/>
            <person name="Pilcher K."/>
            <person name="Chen G."/>
            <person name="Saunders D."/>
            <person name="Sodergren E.J."/>
            <person name="Davis P."/>
            <person name="Kerhornou A."/>
            <person name="Nie X."/>
            <person name="Hall N."/>
            <person name="Anjard C."/>
            <person name="Hemphill L."/>
            <person name="Bason N."/>
            <person name="Farbrother P."/>
            <person name="Desany B."/>
            <person name="Just E."/>
            <person name="Morio T."/>
            <person name="Rost R."/>
            <person name="Churcher C.M."/>
            <person name="Cooper J."/>
            <person name="Haydock S."/>
            <person name="van Driessche N."/>
            <person name="Cronin A."/>
            <person name="Goodhead I."/>
            <person name="Muzny D.M."/>
            <person name="Mourier T."/>
            <person name="Pain A."/>
            <person name="Lu M."/>
            <person name="Harper D."/>
            <person name="Lindsay R."/>
            <person name="Hauser H."/>
            <person name="James K.D."/>
            <person name="Quiles M."/>
            <person name="Madan Babu M."/>
            <person name="Saito T."/>
            <person name="Buchrieser C."/>
            <person name="Wardroper A."/>
            <person name="Felder M."/>
            <person name="Thangavelu M."/>
            <person name="Johnson D."/>
            <person name="Knights A."/>
            <person name="Loulseged H."/>
            <person name="Mungall K.L."/>
            <person name="Oliver K."/>
            <person name="Price C."/>
            <person name="Quail M.A."/>
            <person name="Urushihara H."/>
            <person name="Hernandez J."/>
            <person name="Rabbinowitsch E."/>
            <person name="Steffen D."/>
            <person name="Sanders M."/>
            <person name="Ma J."/>
            <person name="Kohara Y."/>
            <person name="Sharp S."/>
            <person name="Simmonds M.N."/>
            <person name="Spiegler S."/>
            <person name="Tivey A."/>
            <person name="Sugano S."/>
            <person name="White B."/>
            <person name="Walker D."/>
            <person name="Woodward J.R."/>
            <person name="Winckler T."/>
            <person name="Tanaka Y."/>
            <person name="Shaulsky G."/>
            <person name="Schleicher M."/>
            <person name="Weinstock G.M."/>
            <person name="Rosenthal A."/>
            <person name="Cox E.C."/>
            <person name="Chisholm R.L."/>
            <person name="Gibbs R.A."/>
            <person name="Loomis W.F."/>
            <person name="Platzer M."/>
            <person name="Kay R.R."/>
            <person name="Williams J.G."/>
            <person name="Dear P.H."/>
            <person name="Noegel A.A."/>
            <person name="Barrell B.G."/>
            <person name="Kuspa A."/>
        </authorList>
    </citation>
    <scope>NUCLEOTIDE SEQUENCE [LARGE SCALE GENOMIC DNA]</scope>
    <source>
        <strain>AX4</strain>
    </source>
</reference>
<reference key="2">
    <citation type="journal article" date="2006" name="PLoS Genet.">
        <title>The dictyostelium kinome -- analysis of the protein kinases from a simple model organism.</title>
        <authorList>
            <person name="Goldberg J.M."/>
            <person name="Manning G."/>
            <person name="Liu A."/>
            <person name="Fey P."/>
            <person name="Pilcher K.E."/>
            <person name="Xu Y."/>
            <person name="Smith J.L."/>
        </authorList>
    </citation>
    <scope>GENE FAMILY</scope>
    <scope>NOMENCLATURE</scope>
</reference>
<proteinExistence type="predicted"/>
<sequence length="806" mass="88947">MSNKTLPYCCEHGLKDEVIALLAKGEDVNQKDGSNRYPLHYAAIGGYIEIVAMLLERGALVNCSTPRGATPLHYASRGGRIECIQLLIDNKADVNCRDGAGSTPLHTALQCNETKCAIALIETFGADVNLKTAEGSTALHLASARGLVPVIVALLENGARADVRDSKENSPFQSLPINLTENEKKEKIENSISQDISKLFNINKNREFSGVGKKEDDDNNMKIDKQESEQQSTSDKLYSDITFLIENQKVYAHKCILQARCPNFMSSINNKIEQQQSQKPIEIKDYSFKLFLSFIEWIYTGSIEKFESTSKSIDLSFQFSILLMGEKFDCKGLVSYCREFIKESIGDSNVGSIWSIIKKLPTSTRSNLGNLVRDCLITMVRSWNIFTMTKTFSTDINKSDIIEIIKSLAPFITETPISEIKQTRTANANASNSNQSKTPAKRTSTTNTNNNIPQQNITSSNNTPQQNTSSSSSSSTTSSTPSKSSSSTPSKSTSTSSSSSSSSSSSSSSSSNYSDSMNEKNLTFCKGLINGMFKKKTSLAFQRPVDPLAEGIPDYFDVIKHPMDLGTIKGKLDNNGYSTIKDFAADVRLMFENALTYNADSSPVWKHAKTLLNAFDQKFLQNFPNEKPPTYKPPPPTPTPIPTQQQQQQSTSSTSTPTSEKKRKHDEHVKVKEDTNSAQPTSSSSNHTNGENASSSSSSSSSKQSNNNNNNNNNNNSNSTTNSSSSSSSTTTTQKKYSDEERRSLMERINELAPDDVQEVLNIIDPNAIKQADESLEIDMYQIDDKNLSQVESFINECFKKQKQDE</sequence>
<keyword id="KW-0040">ANK repeat</keyword>
<keyword id="KW-0103">Bromodomain</keyword>
<keyword id="KW-1185">Reference proteome</keyword>
<keyword id="KW-0677">Repeat</keyword>
<accession>Q54BA2</accession>
<evidence type="ECO:0000255" key="1">
    <source>
        <dbReference type="PROSITE-ProRule" id="PRU00035"/>
    </source>
</evidence>
<evidence type="ECO:0000255" key="2">
    <source>
        <dbReference type="PROSITE-ProRule" id="PRU00037"/>
    </source>
</evidence>
<evidence type="ECO:0000255" key="3">
    <source>
        <dbReference type="PROSITE-ProRule" id="PRU00857"/>
    </source>
</evidence>
<evidence type="ECO:0000256" key="4">
    <source>
        <dbReference type="SAM" id="MobiDB-lite"/>
    </source>
</evidence>
<protein>
    <recommendedName>
        <fullName>Ankyrin repeat, bromo and BTB domain-containing protein DDB_G0293800</fullName>
    </recommendedName>
</protein>